<gene>
    <name evidence="1" type="primary">panD</name>
    <name type="ordered locus">LA_1729</name>
</gene>
<keyword id="KW-0068">Autocatalytic cleavage</keyword>
<keyword id="KW-0963">Cytoplasm</keyword>
<keyword id="KW-0210">Decarboxylase</keyword>
<keyword id="KW-0456">Lyase</keyword>
<keyword id="KW-0566">Pantothenate biosynthesis</keyword>
<keyword id="KW-0670">Pyruvate</keyword>
<keyword id="KW-1185">Reference proteome</keyword>
<keyword id="KW-0704">Schiff base</keyword>
<keyword id="KW-0865">Zymogen</keyword>
<dbReference type="EC" id="4.1.1.11" evidence="1"/>
<dbReference type="EMBL" id="AE010300">
    <property type="protein sequence ID" value="AAN48928.2"/>
    <property type="status" value="ALT_INIT"/>
    <property type="molecule type" value="Genomic_DNA"/>
</dbReference>
<dbReference type="RefSeq" id="NP_711910.2">
    <property type="nucleotide sequence ID" value="NC_004342.2"/>
</dbReference>
<dbReference type="SMR" id="Q8CVE9"/>
<dbReference type="FunCoup" id="Q8CVE9">
    <property type="interactions" value="294"/>
</dbReference>
<dbReference type="STRING" id="189518.LA_1729"/>
<dbReference type="PaxDb" id="189518-LA_1729"/>
<dbReference type="EnsemblBacteria" id="AAN48928">
    <property type="protein sequence ID" value="AAN48928"/>
    <property type="gene ID" value="LA_1729"/>
</dbReference>
<dbReference type="KEGG" id="lil:LA_1729"/>
<dbReference type="PATRIC" id="fig|189518.3.peg.1720"/>
<dbReference type="HOGENOM" id="CLU_115305_2_0_12"/>
<dbReference type="InParanoid" id="Q8CVE9"/>
<dbReference type="OrthoDB" id="9803983at2"/>
<dbReference type="UniPathway" id="UPA00028">
    <property type="reaction ID" value="UER00002"/>
</dbReference>
<dbReference type="Proteomes" id="UP000001408">
    <property type="component" value="Chromosome I"/>
</dbReference>
<dbReference type="GO" id="GO:0005829">
    <property type="term" value="C:cytosol"/>
    <property type="evidence" value="ECO:0000318"/>
    <property type="project" value="GO_Central"/>
</dbReference>
<dbReference type="GO" id="GO:0004068">
    <property type="term" value="F:aspartate 1-decarboxylase activity"/>
    <property type="evidence" value="ECO:0000318"/>
    <property type="project" value="GO_Central"/>
</dbReference>
<dbReference type="GO" id="GO:0006523">
    <property type="term" value="P:alanine biosynthetic process"/>
    <property type="evidence" value="ECO:0000318"/>
    <property type="project" value="GO_Central"/>
</dbReference>
<dbReference type="GO" id="GO:0015940">
    <property type="term" value="P:pantothenate biosynthetic process"/>
    <property type="evidence" value="ECO:0000318"/>
    <property type="project" value="GO_Central"/>
</dbReference>
<dbReference type="CDD" id="cd06919">
    <property type="entry name" value="Asp_decarbox"/>
    <property type="match status" value="1"/>
</dbReference>
<dbReference type="Gene3D" id="2.40.40.20">
    <property type="match status" value="1"/>
</dbReference>
<dbReference type="HAMAP" id="MF_00446">
    <property type="entry name" value="PanD"/>
    <property type="match status" value="1"/>
</dbReference>
<dbReference type="InterPro" id="IPR009010">
    <property type="entry name" value="Asp_de-COase-like_dom_sf"/>
</dbReference>
<dbReference type="InterPro" id="IPR003190">
    <property type="entry name" value="Asp_decarbox"/>
</dbReference>
<dbReference type="NCBIfam" id="TIGR00223">
    <property type="entry name" value="panD"/>
    <property type="match status" value="1"/>
</dbReference>
<dbReference type="PANTHER" id="PTHR21012">
    <property type="entry name" value="ASPARTATE 1-DECARBOXYLASE"/>
    <property type="match status" value="1"/>
</dbReference>
<dbReference type="PANTHER" id="PTHR21012:SF0">
    <property type="entry name" value="ASPARTATE 1-DECARBOXYLASE"/>
    <property type="match status" value="1"/>
</dbReference>
<dbReference type="Pfam" id="PF02261">
    <property type="entry name" value="Asp_decarbox"/>
    <property type="match status" value="1"/>
</dbReference>
<dbReference type="PIRSF" id="PIRSF006246">
    <property type="entry name" value="Asp_decarbox"/>
    <property type="match status" value="1"/>
</dbReference>
<dbReference type="SUPFAM" id="SSF50692">
    <property type="entry name" value="ADC-like"/>
    <property type="match status" value="1"/>
</dbReference>
<name>PAND_LEPIN</name>
<reference key="1">
    <citation type="journal article" date="2003" name="Nature">
        <title>Unique physiological and pathogenic features of Leptospira interrogans revealed by whole-genome sequencing.</title>
        <authorList>
            <person name="Ren S.-X."/>
            <person name="Fu G."/>
            <person name="Jiang X.-G."/>
            <person name="Zeng R."/>
            <person name="Miao Y.-G."/>
            <person name="Xu H."/>
            <person name="Zhang Y.-X."/>
            <person name="Xiong H."/>
            <person name="Lu G."/>
            <person name="Lu L.-F."/>
            <person name="Jiang H.-Q."/>
            <person name="Jia J."/>
            <person name="Tu Y.-F."/>
            <person name="Jiang J.-X."/>
            <person name="Gu W.-Y."/>
            <person name="Zhang Y.-Q."/>
            <person name="Cai Z."/>
            <person name="Sheng H.-H."/>
            <person name="Yin H.-F."/>
            <person name="Zhang Y."/>
            <person name="Zhu G.-F."/>
            <person name="Wan M."/>
            <person name="Huang H.-L."/>
            <person name="Qian Z."/>
            <person name="Wang S.-Y."/>
            <person name="Ma W."/>
            <person name="Yao Z.-J."/>
            <person name="Shen Y."/>
            <person name="Qiang B.-Q."/>
            <person name="Xia Q.-C."/>
            <person name="Guo X.-K."/>
            <person name="Danchin A."/>
            <person name="Saint Girons I."/>
            <person name="Somerville R.L."/>
            <person name="Wen Y.-M."/>
            <person name="Shi M.-H."/>
            <person name="Chen Z."/>
            <person name="Xu J.-G."/>
            <person name="Zhao G.-P."/>
        </authorList>
    </citation>
    <scope>NUCLEOTIDE SEQUENCE [LARGE SCALE GENOMIC DNA]</scope>
    <source>
        <strain>56601</strain>
    </source>
</reference>
<comment type="function">
    <text evidence="1">Catalyzes the pyruvoyl-dependent decarboxylation of aspartate to produce beta-alanine.</text>
</comment>
<comment type="catalytic activity">
    <reaction evidence="1">
        <text>L-aspartate + H(+) = beta-alanine + CO2</text>
        <dbReference type="Rhea" id="RHEA:19497"/>
        <dbReference type="ChEBI" id="CHEBI:15378"/>
        <dbReference type="ChEBI" id="CHEBI:16526"/>
        <dbReference type="ChEBI" id="CHEBI:29991"/>
        <dbReference type="ChEBI" id="CHEBI:57966"/>
        <dbReference type="EC" id="4.1.1.11"/>
    </reaction>
</comment>
<comment type="cofactor">
    <cofactor evidence="1">
        <name>pyruvate</name>
        <dbReference type="ChEBI" id="CHEBI:15361"/>
    </cofactor>
    <text evidence="1">Binds 1 pyruvoyl group covalently per subunit.</text>
</comment>
<comment type="pathway">
    <text evidence="1">Cofactor biosynthesis; (R)-pantothenate biosynthesis; beta-alanine from L-aspartate: step 1/1.</text>
</comment>
<comment type="subunit">
    <text evidence="1">Heterooctamer of four alpha and four beta subunits.</text>
</comment>
<comment type="subcellular location">
    <subcellularLocation>
        <location evidence="1">Cytoplasm</location>
    </subcellularLocation>
</comment>
<comment type="PTM">
    <text evidence="1">Is synthesized initially as an inactive proenzyme, which is activated by self-cleavage at a specific serine bond to produce a beta-subunit with a hydroxyl group at its C-terminus and an alpha-subunit with a pyruvoyl group at its N-terminus.</text>
</comment>
<comment type="similarity">
    <text evidence="1">Belongs to the PanD family.</text>
</comment>
<comment type="sequence caution" evidence="2">
    <conflict type="erroneous initiation">
        <sequence resource="EMBL-CDS" id="AAN48928"/>
    </conflict>
    <text>Truncated N-terminus.</text>
</comment>
<accession>Q8CVE9</accession>
<protein>
    <recommendedName>
        <fullName evidence="1">Aspartate 1-decarboxylase</fullName>
        <ecNumber evidence="1">4.1.1.11</ecNumber>
    </recommendedName>
    <alternativeName>
        <fullName evidence="1">Aspartate alpha-decarboxylase</fullName>
    </alternativeName>
    <component>
        <recommendedName>
            <fullName evidence="1">Aspartate 1-decarboxylase beta chain</fullName>
        </recommendedName>
    </component>
    <component>
        <recommendedName>
            <fullName evidence="1">Aspartate 1-decarboxylase alpha chain</fullName>
        </recommendedName>
    </component>
</protein>
<feature type="chain" id="PRO_0000023103" description="Aspartate 1-decarboxylase beta chain" evidence="1">
    <location>
        <begin position="1"/>
        <end position="24"/>
    </location>
</feature>
<feature type="chain" id="PRO_0000023104" description="Aspartate 1-decarboxylase alpha chain" evidence="1">
    <location>
        <begin position="25"/>
        <end position="116"/>
    </location>
</feature>
<feature type="active site" description="Schiff-base intermediate with substrate; via pyruvic acid" evidence="1">
    <location>
        <position position="25"/>
    </location>
</feature>
<feature type="active site" description="Proton donor" evidence="1">
    <location>
        <position position="58"/>
    </location>
</feature>
<feature type="binding site" evidence="1">
    <location>
        <position position="57"/>
    </location>
    <ligand>
        <name>substrate</name>
    </ligand>
</feature>
<feature type="binding site" evidence="1">
    <location>
        <begin position="73"/>
        <end position="75"/>
    </location>
    <ligand>
        <name>substrate</name>
    </ligand>
</feature>
<feature type="modified residue" description="Pyruvic acid (Ser)" evidence="1">
    <location>
        <position position="25"/>
    </location>
</feature>
<organism>
    <name type="scientific">Leptospira interrogans serogroup Icterohaemorrhagiae serovar Lai (strain 56601)</name>
    <dbReference type="NCBI Taxonomy" id="189518"/>
    <lineage>
        <taxon>Bacteria</taxon>
        <taxon>Pseudomonadati</taxon>
        <taxon>Spirochaetota</taxon>
        <taxon>Spirochaetia</taxon>
        <taxon>Leptospirales</taxon>
        <taxon>Leptospiraceae</taxon>
        <taxon>Leptospira</taxon>
    </lineage>
</organism>
<proteinExistence type="inferred from homology"/>
<evidence type="ECO:0000255" key="1">
    <source>
        <dbReference type="HAMAP-Rule" id="MF_00446"/>
    </source>
</evidence>
<evidence type="ECO:0000305" key="2"/>
<sequence length="116" mass="12834">MQITVMKGKIHRATVTDADLNYEGSLTVDMDLVDAAGMRVYEKVSVVNVNNGARFETYIIEGKRGSGEICLNGAAARLGMKGDKIIIITYAQVEEQELASDYTPKVVHVDEKNRKR</sequence>